<evidence type="ECO:0000250" key="1">
    <source>
        <dbReference type="UniProtKB" id="P35268"/>
    </source>
</evidence>
<evidence type="ECO:0000269" key="2">
    <source>
    </source>
</evidence>
<evidence type="ECO:0000305" key="3"/>
<evidence type="ECO:0007744" key="4">
    <source>
        <dbReference type="PDB" id="7CPU"/>
    </source>
</evidence>
<evidence type="ECO:0007744" key="5">
    <source>
        <dbReference type="PDB" id="7CPV"/>
    </source>
</evidence>
<evidence type="ECO:0007744" key="6">
    <source>
    </source>
</evidence>
<evidence type="ECO:0007744" key="7">
    <source>
    </source>
</evidence>
<feature type="chain" id="PRO_0000215502" description="Large ribosomal subunit protein eL22">
    <location>
        <begin position="1"/>
        <end position="128"/>
    </location>
</feature>
<feature type="modified residue" description="Phosphothreonine" evidence="6">
    <location>
        <position position="62"/>
    </location>
</feature>
<feature type="modified residue" description="Phosphoserine" evidence="1">
    <location>
        <position position="66"/>
    </location>
</feature>
<feature type="modified residue" description="N6-succinyllysine" evidence="7">
    <location>
        <position position="69"/>
    </location>
</feature>
<gene>
    <name type="primary">Rpl22</name>
</gene>
<protein>
    <recommendedName>
        <fullName evidence="3">Large ribosomal subunit protein eL22</fullName>
    </recommendedName>
    <alternativeName>
        <fullName>60S ribosomal protein L22</fullName>
    </alternativeName>
    <alternativeName>
        <fullName>Heparin-binding protein HBp15</fullName>
    </alternativeName>
</protein>
<keyword id="KW-0002">3D-structure</keyword>
<keyword id="KW-0963">Cytoplasm</keyword>
<keyword id="KW-0358">Heparin-binding</keyword>
<keyword id="KW-0597">Phosphoprotein</keyword>
<keyword id="KW-1185">Reference proteome</keyword>
<keyword id="KW-0687">Ribonucleoprotein</keyword>
<keyword id="KW-0689">Ribosomal protein</keyword>
<keyword id="KW-0694">RNA-binding</keyword>
<dbReference type="EMBL" id="D17653">
    <property type="protein sequence ID" value="BAA04546.1"/>
    <property type="molecule type" value="mRNA"/>
</dbReference>
<dbReference type="EMBL" id="BC007139">
    <property type="protein sequence ID" value="AAH07139.1"/>
    <property type="molecule type" value="mRNA"/>
</dbReference>
<dbReference type="EMBL" id="BC021344">
    <property type="protein sequence ID" value="AAH21344.1"/>
    <property type="molecule type" value="mRNA"/>
</dbReference>
<dbReference type="CCDS" id="CCDS18999.1"/>
<dbReference type="PIR" id="JC2119">
    <property type="entry name" value="JC2119"/>
</dbReference>
<dbReference type="RefSeq" id="NP_033105.1">
    <property type="nucleotide sequence ID" value="NM_009079.4"/>
</dbReference>
<dbReference type="PDB" id="6SWA">
    <property type="method" value="EM"/>
    <property type="resolution" value="3.10 A"/>
    <property type="chains" value="S=1-128"/>
</dbReference>
<dbReference type="PDB" id="7CPU">
    <property type="method" value="EM"/>
    <property type="resolution" value="2.82 A"/>
    <property type="chains" value="LU=1-128"/>
</dbReference>
<dbReference type="PDB" id="7CPV">
    <property type="method" value="EM"/>
    <property type="resolution" value="3.03 A"/>
    <property type="chains" value="LU=1-128"/>
</dbReference>
<dbReference type="PDB" id="7LS1">
    <property type="method" value="EM"/>
    <property type="resolution" value="3.30 A"/>
    <property type="chains" value="O2=1-128"/>
</dbReference>
<dbReference type="PDB" id="7LS2">
    <property type="method" value="EM"/>
    <property type="resolution" value="3.10 A"/>
    <property type="chains" value="O2=1-128"/>
</dbReference>
<dbReference type="PDBsum" id="6SWA"/>
<dbReference type="PDBsum" id="7CPU"/>
<dbReference type="PDBsum" id="7CPV"/>
<dbReference type="PDBsum" id="7LS1"/>
<dbReference type="PDBsum" id="7LS2"/>
<dbReference type="EMDB" id="EMD-10321"/>
<dbReference type="EMDB" id="EMD-23500"/>
<dbReference type="EMDB" id="EMD-23501"/>
<dbReference type="EMDB" id="EMD-30432"/>
<dbReference type="EMDB" id="EMD-30433"/>
<dbReference type="SMR" id="P67984"/>
<dbReference type="BioGRID" id="202971">
    <property type="interactions" value="109"/>
</dbReference>
<dbReference type="BioGRID" id="3417155">
    <property type="interactions" value="1"/>
</dbReference>
<dbReference type="ComplexPortal" id="CPX-5262">
    <property type="entry name" value="60S cytosolic large ribosomal subunit"/>
</dbReference>
<dbReference type="ComplexPortal" id="CPX-7662">
    <property type="entry name" value="60S cytosolic large ribosomal subunit, testis-specific variant"/>
</dbReference>
<dbReference type="ComplexPortal" id="CPX-7663">
    <property type="entry name" value="60S cytosolic large ribosomal subunit, striated muscle variant"/>
</dbReference>
<dbReference type="FunCoup" id="P67984">
    <property type="interactions" value="2132"/>
</dbReference>
<dbReference type="IntAct" id="P67984">
    <property type="interactions" value="4"/>
</dbReference>
<dbReference type="MINT" id="P67984"/>
<dbReference type="STRING" id="10090.ENSMUSP00000118787"/>
<dbReference type="GlyGen" id="P67984">
    <property type="glycosylation" value="1 site, 1 O-linked glycan (1 site)"/>
</dbReference>
<dbReference type="iPTMnet" id="P67984"/>
<dbReference type="PhosphoSitePlus" id="P67984"/>
<dbReference type="SwissPalm" id="P67984"/>
<dbReference type="jPOST" id="P67984"/>
<dbReference type="PaxDb" id="10090-ENSMUSP00000118787"/>
<dbReference type="PeptideAtlas" id="P67984"/>
<dbReference type="ProteomicsDB" id="253299"/>
<dbReference type="Pumba" id="P67984"/>
<dbReference type="Antibodypedia" id="27215">
    <property type="antibodies" value="187 antibodies from 30 providers"/>
</dbReference>
<dbReference type="DNASU" id="19934"/>
<dbReference type="Ensembl" id="ENSMUST00000103191.11">
    <property type="protein sequence ID" value="ENSMUSP00000099480.5"/>
    <property type="gene ID" value="ENSMUSG00000028936.16"/>
</dbReference>
<dbReference type="Ensembl" id="ENSMUST00000139685.8">
    <property type="protein sequence ID" value="ENSMUSP00000118787.2"/>
    <property type="gene ID" value="ENSMUSG00000028936.16"/>
</dbReference>
<dbReference type="Ensembl" id="ENSMUST00000188151.2">
    <property type="protein sequence ID" value="ENSMUSP00000140276.2"/>
    <property type="gene ID" value="ENSMUSG00000028936.16"/>
</dbReference>
<dbReference type="GeneID" id="19934"/>
<dbReference type="KEGG" id="mmu:19934"/>
<dbReference type="UCSC" id="uc008wah.2">
    <property type="organism name" value="mouse"/>
</dbReference>
<dbReference type="AGR" id="MGI:99262"/>
<dbReference type="CTD" id="6146"/>
<dbReference type="MGI" id="MGI:99262">
    <property type="gene designation" value="Rpl22"/>
</dbReference>
<dbReference type="VEuPathDB" id="HostDB:ENSMUSG00000028936"/>
<dbReference type="eggNOG" id="KOG3434">
    <property type="taxonomic scope" value="Eukaryota"/>
</dbReference>
<dbReference type="GeneTree" id="ENSGT00940000153314"/>
<dbReference type="HOGENOM" id="CLU_105624_0_1_1"/>
<dbReference type="InParanoid" id="P67984"/>
<dbReference type="OMA" id="IMEIGSF"/>
<dbReference type="PhylomeDB" id="P67984"/>
<dbReference type="TreeFam" id="TF313018"/>
<dbReference type="Reactome" id="R-MMU-156827">
    <property type="pathway name" value="L13a-mediated translational silencing of Ceruloplasmin expression"/>
</dbReference>
<dbReference type="Reactome" id="R-MMU-1799339">
    <property type="pathway name" value="SRP-dependent cotranslational protein targeting to membrane"/>
</dbReference>
<dbReference type="Reactome" id="R-MMU-6791226">
    <property type="pathway name" value="Major pathway of rRNA processing in the nucleolus and cytosol"/>
</dbReference>
<dbReference type="Reactome" id="R-MMU-72689">
    <property type="pathway name" value="Formation of a pool of free 40S subunits"/>
</dbReference>
<dbReference type="Reactome" id="R-MMU-72706">
    <property type="pathway name" value="GTP hydrolysis and joining of the 60S ribosomal subunit"/>
</dbReference>
<dbReference type="Reactome" id="R-MMU-975956">
    <property type="pathway name" value="Nonsense Mediated Decay (NMD) independent of the Exon Junction Complex (EJC)"/>
</dbReference>
<dbReference type="Reactome" id="R-MMU-975957">
    <property type="pathway name" value="Nonsense Mediated Decay (NMD) enhanced by the Exon Junction Complex (EJC)"/>
</dbReference>
<dbReference type="BioGRID-ORCS" id="19934">
    <property type="hits" value="6 hits in 77 CRISPR screens"/>
</dbReference>
<dbReference type="ChiTaRS" id="Rpl22">
    <property type="organism name" value="mouse"/>
</dbReference>
<dbReference type="PRO" id="PR:P67984"/>
<dbReference type="Proteomes" id="UP000000589">
    <property type="component" value="Chromosome 4"/>
</dbReference>
<dbReference type="RNAct" id="P67984">
    <property type="molecule type" value="protein"/>
</dbReference>
<dbReference type="Bgee" id="ENSMUSG00000028936">
    <property type="expression patterns" value="Expressed in urinary bladder urothelium and 256 other cell types or tissues"/>
</dbReference>
<dbReference type="ExpressionAtlas" id="P67984">
    <property type="expression patterns" value="baseline and differential"/>
</dbReference>
<dbReference type="GO" id="GO:0005737">
    <property type="term" value="C:cytoplasm"/>
    <property type="evidence" value="ECO:0000250"/>
    <property type="project" value="MGI"/>
</dbReference>
<dbReference type="GO" id="GO:0005829">
    <property type="term" value="C:cytosol"/>
    <property type="evidence" value="ECO:0000304"/>
    <property type="project" value="Reactome"/>
</dbReference>
<dbReference type="GO" id="GO:0022625">
    <property type="term" value="C:cytosolic large ribosomal subunit"/>
    <property type="evidence" value="ECO:0000314"/>
    <property type="project" value="UniProtKB"/>
</dbReference>
<dbReference type="GO" id="GO:0098978">
    <property type="term" value="C:glutamatergic synapse"/>
    <property type="evidence" value="ECO:0000314"/>
    <property type="project" value="SynGO"/>
</dbReference>
<dbReference type="GO" id="GO:0005634">
    <property type="term" value="C:nucleus"/>
    <property type="evidence" value="ECO:0007669"/>
    <property type="project" value="Ensembl"/>
</dbReference>
<dbReference type="GO" id="GO:0098794">
    <property type="term" value="C:postsynapse"/>
    <property type="evidence" value="ECO:0000303"/>
    <property type="project" value="SynGO"/>
</dbReference>
<dbReference type="GO" id="GO:0098793">
    <property type="term" value="C:presynapse"/>
    <property type="evidence" value="ECO:0000314"/>
    <property type="project" value="SynGO"/>
</dbReference>
<dbReference type="GO" id="GO:1990904">
    <property type="term" value="C:ribonucleoprotein complex"/>
    <property type="evidence" value="ECO:0000266"/>
    <property type="project" value="MGI"/>
</dbReference>
<dbReference type="GO" id="GO:0005840">
    <property type="term" value="C:ribosome"/>
    <property type="evidence" value="ECO:0000314"/>
    <property type="project" value="SynGO"/>
</dbReference>
<dbReference type="GO" id="GO:0045202">
    <property type="term" value="C:synapse"/>
    <property type="evidence" value="ECO:0000314"/>
    <property type="project" value="SynGO"/>
</dbReference>
<dbReference type="GO" id="GO:0008201">
    <property type="term" value="F:heparin binding"/>
    <property type="evidence" value="ECO:0000314"/>
    <property type="project" value="MGI"/>
</dbReference>
<dbReference type="GO" id="GO:0042802">
    <property type="term" value="F:identical protein binding"/>
    <property type="evidence" value="ECO:0007669"/>
    <property type="project" value="Ensembl"/>
</dbReference>
<dbReference type="GO" id="GO:0003723">
    <property type="term" value="F:RNA binding"/>
    <property type="evidence" value="ECO:0007669"/>
    <property type="project" value="UniProtKB-KW"/>
</dbReference>
<dbReference type="GO" id="GO:0003735">
    <property type="term" value="F:structural constituent of ribosome"/>
    <property type="evidence" value="ECO:0000314"/>
    <property type="project" value="UniProtKB"/>
</dbReference>
<dbReference type="GO" id="GO:0046632">
    <property type="term" value="P:alpha-beta T cell differentiation"/>
    <property type="evidence" value="ECO:0000315"/>
    <property type="project" value="MGI"/>
</dbReference>
<dbReference type="GO" id="GO:0140242">
    <property type="term" value="P:translation at postsynapse"/>
    <property type="evidence" value="ECO:0000303"/>
    <property type="project" value="SynGO"/>
</dbReference>
<dbReference type="GO" id="GO:0140236">
    <property type="term" value="P:translation at presynapse"/>
    <property type="evidence" value="ECO:0000314"/>
    <property type="project" value="SynGO"/>
</dbReference>
<dbReference type="FunFam" id="3.30.1360.210:FF:000001">
    <property type="entry name" value="60S ribosomal protein L22 1"/>
    <property type="match status" value="1"/>
</dbReference>
<dbReference type="Gene3D" id="3.30.1360.210">
    <property type="match status" value="1"/>
</dbReference>
<dbReference type="InterPro" id="IPR002671">
    <property type="entry name" value="Ribosomal_eL22"/>
</dbReference>
<dbReference type="InterPro" id="IPR038526">
    <property type="entry name" value="Ribosomal_eL22_sf"/>
</dbReference>
<dbReference type="PANTHER" id="PTHR10064">
    <property type="entry name" value="60S RIBOSOMAL PROTEIN L22"/>
    <property type="match status" value="1"/>
</dbReference>
<dbReference type="PANTHER" id="PTHR10064:SF2">
    <property type="entry name" value="LARGE RIBOSOMAL SUBUNIT PROTEIN EL22"/>
    <property type="match status" value="1"/>
</dbReference>
<dbReference type="Pfam" id="PF01776">
    <property type="entry name" value="Ribosomal_L22e"/>
    <property type="match status" value="1"/>
</dbReference>
<organism>
    <name type="scientific">Mus musculus</name>
    <name type="common">Mouse</name>
    <dbReference type="NCBI Taxonomy" id="10090"/>
    <lineage>
        <taxon>Eukaryota</taxon>
        <taxon>Metazoa</taxon>
        <taxon>Chordata</taxon>
        <taxon>Craniata</taxon>
        <taxon>Vertebrata</taxon>
        <taxon>Euteleostomi</taxon>
        <taxon>Mammalia</taxon>
        <taxon>Eutheria</taxon>
        <taxon>Euarchontoglires</taxon>
        <taxon>Glires</taxon>
        <taxon>Rodentia</taxon>
        <taxon>Myomorpha</taxon>
        <taxon>Muroidea</taxon>
        <taxon>Muridae</taxon>
        <taxon>Murinae</taxon>
        <taxon>Mus</taxon>
        <taxon>Mus</taxon>
    </lineage>
</organism>
<proteinExistence type="evidence at protein level"/>
<accession>P67984</accession>
<accession>P41104</accession>
<comment type="function">
    <text evidence="2">Component of the large ribosomal subunit (PubMed:36517592). The ribosome is a large ribonucleoprotein complex responsible for the synthesis of proteins in the cell (PubMed:36517592).</text>
</comment>
<comment type="subunit">
    <text evidence="2">Component of the large ribosomal subunit.</text>
</comment>
<comment type="subcellular location">
    <subcellularLocation>
        <location evidence="2">Cytoplasm</location>
    </subcellularLocation>
</comment>
<comment type="similarity">
    <text evidence="3">Belongs to the eukaryotic ribosomal protein eL22 family.</text>
</comment>
<reference key="1">
    <citation type="journal article" date="1994" name="Biochem. Biophys. Res. Commun.">
        <title>A novel heparin-binding protein, HBp15, is identified as mammalian ribosomal protein L22.</title>
        <authorList>
            <person name="Fujita Y."/>
            <person name="Okamoto T."/>
            <person name="Noshiro M."/>
            <person name="Kato Y."/>
            <person name="Takada K."/>
            <person name="Sato J.D."/>
            <person name="Ozaki T."/>
            <person name="McKeehan W.L."/>
            <person name="Crabb J.W."/>
            <person name="Whitney R.G."/>
        </authorList>
    </citation>
    <scope>NUCLEOTIDE SEQUENCE [MRNA]</scope>
    <source>
        <strain>BALB/cJ</strain>
        <tissue>Submandibular gland</tissue>
    </source>
</reference>
<reference key="2">
    <citation type="journal article" date="2004" name="Genome Res.">
        <title>The status, quality, and expansion of the NIH full-length cDNA project: the Mammalian Gene Collection (MGC).</title>
        <authorList>
            <consortium name="The MGC Project Team"/>
        </authorList>
    </citation>
    <scope>NUCLEOTIDE SEQUENCE [LARGE SCALE MRNA]</scope>
    <source>
        <tissue>Mammary tumor</tissue>
        <tissue>Salivary gland</tissue>
    </source>
</reference>
<reference key="3">
    <citation type="journal article" date="2010" name="Cell">
        <title>A tissue-specific atlas of mouse protein phosphorylation and expression.</title>
        <authorList>
            <person name="Huttlin E.L."/>
            <person name="Jedrychowski M.P."/>
            <person name="Elias J.E."/>
            <person name="Goswami T."/>
            <person name="Rad R."/>
            <person name="Beausoleil S.A."/>
            <person name="Villen J."/>
            <person name="Haas W."/>
            <person name="Sowa M.E."/>
            <person name="Gygi S.P."/>
        </authorList>
    </citation>
    <scope>PHOSPHORYLATION [LARGE SCALE ANALYSIS] AT THR-62</scope>
    <scope>IDENTIFICATION BY MASS SPECTROMETRY [LARGE SCALE ANALYSIS]</scope>
    <source>
        <tissue>Brain</tissue>
        <tissue>Brown adipose tissue</tissue>
        <tissue>Heart</tissue>
        <tissue>Kidney</tissue>
        <tissue>Liver</tissue>
        <tissue>Lung</tissue>
        <tissue>Pancreas</tissue>
        <tissue>Spleen</tissue>
        <tissue>Testis</tissue>
    </source>
</reference>
<reference key="4">
    <citation type="journal article" date="2013" name="Mol. Cell">
        <title>SIRT5-mediated lysine desuccinylation impacts diverse metabolic pathways.</title>
        <authorList>
            <person name="Park J."/>
            <person name="Chen Y."/>
            <person name="Tishkoff D.X."/>
            <person name="Peng C."/>
            <person name="Tan M."/>
            <person name="Dai L."/>
            <person name="Xie Z."/>
            <person name="Zhang Y."/>
            <person name="Zwaans B.M."/>
            <person name="Skinner M.E."/>
            <person name="Lombard D.B."/>
            <person name="Zhao Y."/>
        </authorList>
    </citation>
    <scope>SUCCINYLATION [LARGE SCALE ANALYSIS] AT LYS-69</scope>
    <scope>IDENTIFICATION BY MASS SPECTROMETRY [LARGE SCALE ANALYSIS]</scope>
    <source>
        <tissue>Embryonic fibroblast</tissue>
    </source>
</reference>
<reference evidence="4 5" key="5">
    <citation type="journal article" date="2022" name="Nature">
        <title>A male germ-cell-specific ribosome controls male fertility.</title>
        <authorList>
            <person name="Li H."/>
            <person name="Huo Y."/>
            <person name="He X."/>
            <person name="Yao L."/>
            <person name="Zhang H."/>
            <person name="Cui Y."/>
            <person name="Xiao H."/>
            <person name="Xie W."/>
            <person name="Zhang D."/>
            <person name="Wang Y."/>
            <person name="Zhang S."/>
            <person name="Tu H."/>
            <person name="Cheng Y."/>
            <person name="Guo Y."/>
            <person name="Cao X."/>
            <person name="Zhu Y."/>
            <person name="Jiang T."/>
            <person name="Guo X."/>
            <person name="Qin Y."/>
            <person name="Sha J."/>
        </authorList>
    </citation>
    <scope>STRUCTURE BY ELECTRON MICROSCOPY (3.03 ANGSTROMS) OF RIBOSOME</scope>
    <scope>FUNCTION</scope>
    <scope>SUBUNIT</scope>
    <scope>SUBCELLULAR LOCATION</scope>
</reference>
<name>RL22_MOUSE</name>
<sequence>MAPVKKLVAKGGKKKKQVLKFTLDCTHPVEDGIMDAANFEQFLQERIKVNGKAGNLGGGVVTIERSKSKITVTSEVPFSKRYLKYLTKKYLKKNNLRDWLRVVANSKESYELRYFQINQDEEEEEDED</sequence>